<sequence length="648" mass="72444">MHSILRSSLSSREALRMRQLKGLRKERPGRHPLGVRLRAIWTSFLFPNPPHSGGKLRASTAAVEEHQEWSMDLPEGQAGGPTAQMYLWEQPEEASSRPLLSLEEQILNSTFEACDPHKTGTVTVAHLLAYLEAVTGQGPQDVRLQTLARSLDPYGEGAGATVELDTFLVVMRDWIAACQLQGGLERAEETAYEGALASPHLPSVCPEAEESANLESFGGEDPRPEGPATAELLSNLEDLELSNRRLAGENAKLQRSVETAEEGSARLGEEITALRKQLRSTQQALQVAKALDEELEDLKTLAKSLEEQNRSLMAQARHTEKEQQHLAAEVETLQEENEKLLAERDGVKRRSEELATEKDALKRQLCECERLICQREAVLSERTRHAESLARTLEEYRTTTQELRQEISNLEEQLSQSQEGPEELLEGAEAGRVGWIMALPPSLDLEIQAIRQEQDVASAGLSSPLYGVWQWEEVEPEPEPEPEPEPEPEPQEVEFPSEDPARQQTDLQREPVRALEGSRAPCLRLSRSQEEEEEEEESWVLADPSSPLGTYHHKLAPGSSRESCHIVPEMHQALMPVVRDLVPVERSRTQHCLHPQHSPGIRISQHPLVPTPVLGLLLLLLLSILLFSQSPPPTWPHLQLYYLQPPPV</sequence>
<gene>
    <name evidence="11 14" type="primary">Kash5</name>
    <name evidence="14" type="synonym">Ccdc155</name>
</gene>
<feature type="chain" id="PRO_0000331528" description="Protein KASH5">
    <location>
        <begin position="1"/>
        <end position="648"/>
    </location>
</feature>
<feature type="topological domain" description="Cytoplasmic" evidence="3">
    <location>
        <begin position="1"/>
        <end position="606"/>
    </location>
</feature>
<feature type="transmembrane region" description="Helical; Anchor for type IV membrane protein" evidence="3">
    <location>
        <begin position="607"/>
        <end position="627"/>
    </location>
</feature>
<feature type="topological domain" description="Perinuclear space" evidence="3">
    <location>
        <begin position="628"/>
        <end position="648"/>
    </location>
</feature>
<feature type="region of interest" description="Disordered" evidence="4">
    <location>
        <begin position="206"/>
        <end position="228"/>
    </location>
</feature>
<feature type="region of interest" description="Disordered" evidence="4">
    <location>
        <begin position="473"/>
        <end position="545"/>
    </location>
</feature>
<feature type="coiled-coil region" evidence="3">
    <location>
        <begin position="230"/>
        <end position="420"/>
    </location>
</feature>
<feature type="compositionally biased region" description="Acidic residues" evidence="4">
    <location>
        <begin position="473"/>
        <end position="497"/>
    </location>
</feature>
<feature type="mutagenesis site" description="Abolishes interaction with SUN1. Fails to localize at telomere." evidence="5">
    <original>PPP</original>
    <variation>AAA</variation>
    <location>
        <begin position="645"/>
        <end position="647"/>
    </location>
</feature>
<feature type="mutagenesis site" description="Abolishes interaction with SUN1. Fails to localize at telomere." evidence="5">
    <location>
        <begin position="645"/>
        <end position="647"/>
    </location>
</feature>
<feature type="sequence conflict" description="In Ref. 3; AAH50196." evidence="12" ref="3">
    <original>L</original>
    <variation>R</variation>
    <location>
        <position position="9"/>
    </location>
</feature>
<feature type="sequence conflict" description="In Ref. 3; AAH50196." evidence="12" ref="3">
    <original>G</original>
    <variation>R</variation>
    <location>
        <position position="29"/>
    </location>
</feature>
<feature type="sequence conflict" description="In Ref. 3; AAH50196." evidence="12" ref="3">
    <original>G</original>
    <variation>E</variation>
    <location>
        <position position="159"/>
    </location>
</feature>
<feature type="sequence conflict" description="In Ref. 3; AAH50196." evidence="12" ref="3">
    <original>Q</original>
    <variation>P</variation>
    <location>
        <position position="334"/>
    </location>
</feature>
<feature type="sequence conflict" description="In Ref. 3; AAH50196." evidence="12" ref="3">
    <original>W</original>
    <variation>R</variation>
    <location>
        <position position="469"/>
    </location>
</feature>
<dbReference type="EMBL" id="AB725603">
    <property type="protein sequence ID" value="BAM28637.1"/>
    <property type="molecule type" value="mRNA"/>
</dbReference>
<dbReference type="EMBL" id="AC149868">
    <property type="status" value="NOT_ANNOTATED_CDS"/>
    <property type="molecule type" value="Genomic_DNA"/>
</dbReference>
<dbReference type="EMBL" id="BC050196">
    <property type="protein sequence ID" value="AAH50196.1"/>
    <property type="status" value="ALT_INIT"/>
    <property type="molecule type" value="mRNA"/>
</dbReference>
<dbReference type="CCDS" id="CCDS21234.2"/>
<dbReference type="RefSeq" id="NP_958762.2">
    <property type="nucleotide sequence ID" value="NM_201374.2"/>
</dbReference>
<dbReference type="SMR" id="Q80VJ8"/>
<dbReference type="DIP" id="DIP-60733N"/>
<dbReference type="FunCoup" id="Q80VJ8">
    <property type="interactions" value="43"/>
</dbReference>
<dbReference type="IntAct" id="Q80VJ8">
    <property type="interactions" value="6"/>
</dbReference>
<dbReference type="STRING" id="10090.ENSMUSP00000113616"/>
<dbReference type="GlyGen" id="Q80VJ8">
    <property type="glycosylation" value="1 site"/>
</dbReference>
<dbReference type="PaxDb" id="10090-ENSMUSP00000113616"/>
<dbReference type="ProteomicsDB" id="268957"/>
<dbReference type="Antibodypedia" id="9176">
    <property type="antibodies" value="60 antibodies from 17 providers"/>
</dbReference>
<dbReference type="DNASU" id="384619"/>
<dbReference type="Ensembl" id="ENSMUST00000121017.5">
    <property type="protein sequence ID" value="ENSMUSP00000113616.3"/>
    <property type="gene ID" value="ENSMUSG00000038292.15"/>
</dbReference>
<dbReference type="GeneID" id="384619"/>
<dbReference type="KEGG" id="mmu:384619"/>
<dbReference type="UCSC" id="uc009gub.1">
    <property type="organism name" value="mouse"/>
</dbReference>
<dbReference type="AGR" id="MGI:2687329"/>
<dbReference type="CTD" id="147872"/>
<dbReference type="MGI" id="MGI:2687329">
    <property type="gene designation" value="Kash5"/>
</dbReference>
<dbReference type="VEuPathDB" id="HostDB:ENSMUSG00000038292"/>
<dbReference type="eggNOG" id="ENOG502RXNC">
    <property type="taxonomic scope" value="Eukaryota"/>
</dbReference>
<dbReference type="GeneTree" id="ENSGT00420000029926"/>
<dbReference type="HOGENOM" id="CLU_039584_1_0_1"/>
<dbReference type="InParanoid" id="Q80VJ8"/>
<dbReference type="OMA" id="KRQLCEC"/>
<dbReference type="OrthoDB" id="9943648at2759"/>
<dbReference type="PhylomeDB" id="Q80VJ8"/>
<dbReference type="TreeFam" id="TF337560"/>
<dbReference type="BioGRID-ORCS" id="384619">
    <property type="hits" value="3 hits in 115 CRISPR screens"/>
</dbReference>
<dbReference type="ChiTaRS" id="Ccdc155">
    <property type="organism name" value="mouse"/>
</dbReference>
<dbReference type="PRO" id="PR:Q80VJ8"/>
<dbReference type="Proteomes" id="UP000000589">
    <property type="component" value="Chromosome 7"/>
</dbReference>
<dbReference type="RNAct" id="Q80VJ8">
    <property type="molecule type" value="protein"/>
</dbReference>
<dbReference type="Bgee" id="ENSMUSG00000038292">
    <property type="expression patterns" value="Expressed in testis and 47 other cell types or tissues"/>
</dbReference>
<dbReference type="GO" id="GO:0000781">
    <property type="term" value="C:chromosome, telomeric region"/>
    <property type="evidence" value="ECO:0000314"/>
    <property type="project" value="UniProtKB"/>
</dbReference>
<dbReference type="GO" id="GO:0000800">
    <property type="term" value="C:lateral element"/>
    <property type="evidence" value="ECO:0000314"/>
    <property type="project" value="MGI"/>
</dbReference>
<dbReference type="GO" id="GO:0034993">
    <property type="term" value="C:meiotic nuclear membrane microtubule tethering complex"/>
    <property type="evidence" value="ECO:0000314"/>
    <property type="project" value="UniProtKB"/>
</dbReference>
<dbReference type="GO" id="GO:0090619">
    <property type="term" value="C:meiotic spindle pole"/>
    <property type="evidence" value="ECO:0000314"/>
    <property type="project" value="UniProtKB"/>
</dbReference>
<dbReference type="GO" id="GO:0005640">
    <property type="term" value="C:nuclear outer membrane"/>
    <property type="evidence" value="ECO:0000314"/>
    <property type="project" value="MGI"/>
</dbReference>
<dbReference type="GO" id="GO:0070840">
    <property type="term" value="F:dynein complex binding"/>
    <property type="evidence" value="ECO:0000314"/>
    <property type="project" value="MGI"/>
</dbReference>
<dbReference type="GO" id="GO:0042802">
    <property type="term" value="F:identical protein binding"/>
    <property type="evidence" value="ECO:0000314"/>
    <property type="project" value="MGI"/>
</dbReference>
<dbReference type="GO" id="GO:0007015">
    <property type="term" value="P:actin filament organization"/>
    <property type="evidence" value="ECO:0000315"/>
    <property type="project" value="UniProtKB"/>
</dbReference>
<dbReference type="GO" id="GO:0090220">
    <property type="term" value="P:chromosome localization to nuclear envelope involved in homologous chromosome segregation"/>
    <property type="evidence" value="ECO:0000315"/>
    <property type="project" value="MGI"/>
</dbReference>
<dbReference type="GO" id="GO:0000724">
    <property type="term" value="P:double-strand break repair via homologous recombination"/>
    <property type="evidence" value="ECO:0000315"/>
    <property type="project" value="MGI"/>
</dbReference>
<dbReference type="GO" id="GO:0007129">
    <property type="term" value="P:homologous chromosome pairing at meiosis"/>
    <property type="evidence" value="ECO:0000315"/>
    <property type="project" value="MGI"/>
</dbReference>
<dbReference type="GO" id="GO:0045141">
    <property type="term" value="P:meiotic telomere clustering"/>
    <property type="evidence" value="ECO:0000353"/>
    <property type="project" value="MGI"/>
</dbReference>
<dbReference type="GO" id="GO:0048477">
    <property type="term" value="P:oogenesis"/>
    <property type="evidence" value="ECO:0000315"/>
    <property type="project" value="MGI"/>
</dbReference>
<dbReference type="GO" id="GO:0007283">
    <property type="term" value="P:spermatogenesis"/>
    <property type="evidence" value="ECO:0000315"/>
    <property type="project" value="MGI"/>
</dbReference>
<dbReference type="GO" id="GO:0051225">
    <property type="term" value="P:spindle assembly"/>
    <property type="evidence" value="ECO:0000314"/>
    <property type="project" value="UniProtKB"/>
</dbReference>
<dbReference type="GO" id="GO:0051653">
    <property type="term" value="P:spindle localization"/>
    <property type="evidence" value="ECO:0000314"/>
    <property type="project" value="UniProtKB"/>
</dbReference>
<dbReference type="GO" id="GO:0034397">
    <property type="term" value="P:telomere localization"/>
    <property type="evidence" value="ECO:0000315"/>
    <property type="project" value="UniProtKB"/>
</dbReference>
<dbReference type="InterPro" id="IPR028170">
    <property type="entry name" value="KASH5"/>
</dbReference>
<dbReference type="InterPro" id="IPR028168">
    <property type="entry name" value="KASH5_coiled-coil"/>
</dbReference>
<dbReference type="InterPro" id="IPR039508">
    <property type="entry name" value="KASH5_EF-hand-like_dom"/>
</dbReference>
<dbReference type="PANTHER" id="PTHR47300">
    <property type="entry name" value="PROTEIN KASH5"/>
    <property type="match status" value="1"/>
</dbReference>
<dbReference type="PANTHER" id="PTHR47300:SF1">
    <property type="entry name" value="PROTEIN KASH5"/>
    <property type="match status" value="1"/>
</dbReference>
<dbReference type="Pfam" id="PF14658">
    <property type="entry name" value="EF-hand_9"/>
    <property type="match status" value="1"/>
</dbReference>
<dbReference type="Pfam" id="PF14662">
    <property type="entry name" value="KASH_CCD"/>
    <property type="match status" value="1"/>
</dbReference>
<keyword id="KW-0158">Chromosome</keyword>
<keyword id="KW-0175">Coiled coil</keyword>
<keyword id="KW-0469">Meiosis</keyword>
<keyword id="KW-0472">Membrane</keyword>
<keyword id="KW-0539">Nucleus</keyword>
<keyword id="KW-1185">Reference proteome</keyword>
<keyword id="KW-0779">Telomere</keyword>
<keyword id="KW-0812">Transmembrane</keyword>
<keyword id="KW-1133">Transmembrane helix</keyword>
<comment type="function">
    <text evidence="6 8 9">As a component of the LINC (LInker of Nucleoskeleton and Cytoskeleton) complex, involved in the connection between the nuclear lamina and the cytoskeleton. The nucleocytoplasmic interactions established by the LINC complex play an important role in the transmission of mechanical forces across the nuclear envelope and in nuclear movement and positioning. Required for telomere attachment to nuclear envelope in the prophase of meiosis and for rapid telomere prophase movements implicating a SUN1/2:KASH5 LINC complex in which SUN1 and SUN2 seem to act at least partial redundantly. Required for homolog pairing during meiotic prophase in spermatocytes and probably oocytes. Essential for male and female gametogenesis. Recruits cytoplasmic dynein to telomere attachment sites at the nuclear envelope in spermatocytes. In oocytes is involved in meiotic resumption and spindle formation.</text>
</comment>
<comment type="subunit">
    <text evidence="2 5 6 12 13">Core component the LINC complex which is composed of inner nuclear membrane SUN domain-containing proteins coupled to outer nuclear membrane KASH domain-containing nesprins. SUN and KASH domain-containing proteins seem to bind each other promiscuously; however, differentially expression of LINC complex constituents is giving rise to specific assemblies. At least SUN1/2-containing core LINC complexes are proposed to be hexameric composed of three protomers of each KASH and SUN domain-containing protein. Interacts with SUN1; this interaction mediates its telomere localization by forming a SUN1:KASH5 LINC complex. Component of a probable SUN2:KASH5 LINC complex. Self-associates. Interacts with DYNC1H1, DCTN1, DYNC1I1/2 and PAFAH1B1; suggesting the association with the dynein-dynactin motor complex.</text>
</comment>
<comment type="interaction">
    <interactant intactId="EBI-11666341">
        <id>Q80VJ8</id>
    </interactant>
    <interactant intactId="EBI-6752574">
        <id>Q9D666</id>
        <label>Sun1</label>
    </interactant>
    <organismsDiffer>false</organismsDiffer>
    <experiments>4</experiments>
</comment>
<comment type="subcellular location">
    <subcellularLocation>
        <location evidence="6 9">Nucleus outer membrane</location>
        <topology evidence="12">Single-pass type IV membrane protein</topology>
        <orientation evidence="12">Cytoplasmic side</orientation>
    </subcellularLocation>
    <subcellularLocation>
        <location evidence="5">Nucleus</location>
    </subcellularLocation>
    <subcellularLocation>
        <location evidence="5">Chromosome</location>
        <location evidence="5">Telomere</location>
    </subcellularLocation>
    <subcellularLocation>
        <location evidence="1">Nucleus envelope</location>
    </subcellularLocation>
    <text evidence="7 9">Localized exclusively at telomeres from the leptotene to diplotene stages. Colocalizes with SUN2 at sites of telomere attachment in meiocytes. At oocyte MI stage localized around the spindle, at MII stage localized to the spindle poles.</text>
</comment>
<comment type="tissue specificity">
    <text evidence="5 6 9">Restricted to the testis and the early ootidogenesis ovary. Expressed in spermatocytes and oocytes (at protein level).</text>
</comment>
<comment type="domain">
    <text>The C-terminal 22 AA is required and sufficient for localization to telomeres at the nuclear envelope.</text>
</comment>
<comment type="disruption phenotype">
    <text evidence="10">Male and female Kash5-null mice are infertile. Testes from Kash5-null mice have a reduced size compared to those derived from wild-type animal, have a normal tissue organization, but the seminiferous tubules are narrower and present a great decrease in germ cells. No spermatids and mature sperm are observed, indicating spermatocyte arrest.</text>
</comment>
<comment type="sequence caution" evidence="12">
    <conflict type="erroneous initiation">
        <sequence resource="EMBL-CDS" id="AAH50196"/>
    </conflict>
    <text>Truncated N-terminus.</text>
</comment>
<proteinExistence type="evidence at protein level"/>
<accession>Q80VJ8</accession>
<accession>E9QNS3</accession>
<accession>E9QQ69</accession>
<organism>
    <name type="scientific">Mus musculus</name>
    <name type="common">Mouse</name>
    <dbReference type="NCBI Taxonomy" id="10090"/>
    <lineage>
        <taxon>Eukaryota</taxon>
        <taxon>Metazoa</taxon>
        <taxon>Chordata</taxon>
        <taxon>Craniata</taxon>
        <taxon>Vertebrata</taxon>
        <taxon>Euteleostomi</taxon>
        <taxon>Mammalia</taxon>
        <taxon>Eutheria</taxon>
        <taxon>Euarchontoglires</taxon>
        <taxon>Glires</taxon>
        <taxon>Rodentia</taxon>
        <taxon>Myomorpha</taxon>
        <taxon>Muroidea</taxon>
        <taxon>Muridae</taxon>
        <taxon>Murinae</taxon>
        <taxon>Mus</taxon>
        <taxon>Mus</taxon>
    </lineage>
</organism>
<protein>
    <recommendedName>
        <fullName evidence="12">Protein KASH5</fullName>
    </recommendedName>
    <alternativeName>
        <fullName>Coiled-coil domain-containing protein 155</fullName>
    </alternativeName>
    <alternativeName>
        <fullName>KASH domain-containing protein 5</fullName>
    </alternativeName>
</protein>
<reference key="1">
    <citation type="journal article" date="2012" name="J. Cell Biol.">
        <title>A conserved KASH domain protein associates with telomeres, SUN1, and dynactin during mammalian meiosis.</title>
        <authorList>
            <person name="Morimoto A."/>
            <person name="Shibuya H."/>
            <person name="Zhu X."/>
            <person name="Kim J."/>
            <person name="Ishiguro K."/>
            <person name="Han M."/>
            <person name="Watanabe Y."/>
        </authorList>
    </citation>
    <scope>NUCLEOTIDE SEQUENCE [MRNA]</scope>
    <scope>TISSUE SPECIFICITY</scope>
    <scope>SUBCELLULAR LOCATION</scope>
    <scope>INTERACTION WITH SUN1</scope>
    <scope>MUTAGENESIS OF 645-PRO--PRO-647</scope>
</reference>
<reference key="2">
    <citation type="journal article" date="2009" name="PLoS Biol.">
        <title>Lineage-specific biology revealed by a finished genome assembly of the mouse.</title>
        <authorList>
            <person name="Church D.M."/>
            <person name="Goodstadt L."/>
            <person name="Hillier L.W."/>
            <person name="Zody M.C."/>
            <person name="Goldstein S."/>
            <person name="She X."/>
            <person name="Bult C.J."/>
            <person name="Agarwala R."/>
            <person name="Cherry J.L."/>
            <person name="DiCuccio M."/>
            <person name="Hlavina W."/>
            <person name="Kapustin Y."/>
            <person name="Meric P."/>
            <person name="Maglott D."/>
            <person name="Birtle Z."/>
            <person name="Marques A.C."/>
            <person name="Graves T."/>
            <person name="Zhou S."/>
            <person name="Teague B."/>
            <person name="Potamousis K."/>
            <person name="Churas C."/>
            <person name="Place M."/>
            <person name="Herschleb J."/>
            <person name="Runnheim R."/>
            <person name="Forrest D."/>
            <person name="Amos-Landgraf J."/>
            <person name="Schwartz D.C."/>
            <person name="Cheng Z."/>
            <person name="Lindblad-Toh K."/>
            <person name="Eichler E.E."/>
            <person name="Ponting C.P."/>
        </authorList>
    </citation>
    <scope>NUCLEOTIDE SEQUENCE [LARGE SCALE GENOMIC DNA]</scope>
    <source>
        <strain>C57BL/6J</strain>
    </source>
</reference>
<reference key="3">
    <citation type="journal article" date="2004" name="Genome Res.">
        <title>The status, quality, and expansion of the NIH full-length cDNA project: the Mammalian Gene Collection (MGC).</title>
        <authorList>
            <consortium name="The MGC Project Team"/>
        </authorList>
    </citation>
    <scope>NUCLEOTIDE SEQUENCE [LARGE SCALE MRNA]</scope>
    <source>
        <strain>129/Sv X 129SvCp</strain>
        <tissue>Embryonic stem cell</tissue>
    </source>
</reference>
<reference key="4">
    <citation type="journal article" date="2010" name="Cell">
        <title>A tissue-specific atlas of mouse protein phosphorylation and expression.</title>
        <authorList>
            <person name="Huttlin E.L."/>
            <person name="Jedrychowski M.P."/>
            <person name="Elias J.E."/>
            <person name="Goswami T."/>
            <person name="Rad R."/>
            <person name="Beausoleil S.A."/>
            <person name="Villen J."/>
            <person name="Haas W."/>
            <person name="Sowa M.E."/>
            <person name="Gygi S.P."/>
        </authorList>
    </citation>
    <scope>IDENTIFICATION BY MASS SPECTROMETRY [LARGE SCALE ANALYSIS]</scope>
    <source>
        <tissue>Testis</tissue>
    </source>
</reference>
<reference key="5">
    <citation type="journal article" date="2013" name="J. Cell Biol.">
        <title>A mammalian KASH domain protein coupling meiotic chromosomes to the cytoskeleton.</title>
        <authorList>
            <person name="Horn H.F."/>
            <person name="Kim D.I."/>
            <person name="Wright G.D."/>
            <person name="Wong E.S."/>
            <person name="Stewart C.L."/>
            <person name="Burke B."/>
            <person name="Roux K.J."/>
        </authorList>
    </citation>
    <scope>FUNCTION</scope>
    <scope>SUBCELLULAR LOCATION</scope>
    <scope>SUBUNIT</scope>
    <scope>TISSUE SPECIFICITY</scope>
</reference>
<reference key="6">
    <citation type="journal article" date="2014" name="PLoS Genet.">
        <title>Analysis of meiosis in SUN1 deficient mice reveals a distinct role of SUN2 in mammalian meiotic LINC complex formation and function.</title>
        <authorList>
            <person name="Link J."/>
            <person name="Leubner M."/>
            <person name="Schmitt J."/>
            <person name="Goeb E."/>
            <person name="Benavente R."/>
            <person name="Jeang K.T."/>
            <person name="Xu R."/>
            <person name="Alsheimer M."/>
        </authorList>
    </citation>
    <scope>SUBUNIT</scope>
    <scope>SUBCELLULAR LOCATION</scope>
</reference>
<reference key="7">
    <citation type="journal article" date="2015" name="Cell Rep.">
        <title>Mechanism and regulation of rapid telomere prophase movements in mouse meiotic chromosomes.</title>
        <authorList>
            <person name="Lee C.Y."/>
            <person name="Horn H.F."/>
            <person name="Stewart C.L."/>
            <person name="Burke B."/>
            <person name="Bolcun-Filas E."/>
            <person name="Schimenti J.C."/>
            <person name="Dresser M.E."/>
            <person name="Pezza R.J."/>
        </authorList>
    </citation>
    <scope>FUNCTION</scope>
</reference>
<reference key="8">
    <citation type="journal article" date="2016" name="Sci. Rep.">
        <title>Depletion of the LINC complex disrupts cytoskeleton dynamics and meiotic resumption in mouse oocytes.</title>
        <authorList>
            <person name="Luo Y."/>
            <person name="Lee I.W."/>
            <person name="Jo Y.J."/>
            <person name="Namgoong S."/>
            <person name="Kim N.H."/>
        </authorList>
    </citation>
    <scope>FUNCTION</scope>
    <scope>TISSUE SPECIFICITY</scope>
    <scope>SUBCELLULAR LOCATION</scope>
</reference>
<reference key="9">
    <citation type="journal article" date="2022" name="Mol. Hum. Reprod.">
        <title>Novel bi-allelic variants in KASH5 are associated with meiotic arrest and non-obstructive azoospermia.</title>
        <authorList>
            <person name="Yang C."/>
            <person name="Lin X."/>
            <person name="Ji Z."/>
            <person name="Huang Y."/>
            <person name="Zhang L."/>
            <person name="Luo J."/>
            <person name="Chen H."/>
            <person name="Li P."/>
            <person name="Tian R."/>
            <person name="Zhi E."/>
            <person name="Hong Y."/>
            <person name="Zhou Z."/>
            <person name="Zhang F."/>
            <person name="Li Z."/>
            <person name="Yao C."/>
        </authorList>
    </citation>
    <scope>DISRUPTION PHENOTYPE</scope>
</reference>
<name>KASH5_MOUSE</name>
<evidence type="ECO:0000250" key="1">
    <source>
        <dbReference type="UniProtKB" id="Q8N6L0"/>
    </source>
</evidence>
<evidence type="ECO:0000250" key="2">
    <source>
        <dbReference type="UniProtKB" id="Q8WXH0"/>
    </source>
</evidence>
<evidence type="ECO:0000255" key="3"/>
<evidence type="ECO:0000256" key="4">
    <source>
        <dbReference type="SAM" id="MobiDB-lite"/>
    </source>
</evidence>
<evidence type="ECO:0000269" key="5">
    <source>
    </source>
</evidence>
<evidence type="ECO:0000269" key="6">
    <source>
    </source>
</evidence>
<evidence type="ECO:0000269" key="7">
    <source>
    </source>
</evidence>
<evidence type="ECO:0000269" key="8">
    <source>
    </source>
</evidence>
<evidence type="ECO:0000269" key="9">
    <source>
    </source>
</evidence>
<evidence type="ECO:0000269" key="10">
    <source>
    </source>
</evidence>
<evidence type="ECO:0000303" key="11">
    <source>
    </source>
</evidence>
<evidence type="ECO:0000305" key="12"/>
<evidence type="ECO:0000305" key="13">
    <source>
    </source>
</evidence>
<evidence type="ECO:0000312" key="14">
    <source>
        <dbReference type="MGI" id="MGI:2687329"/>
    </source>
</evidence>